<proteinExistence type="evidence at protein level"/>
<organism>
    <name type="scientific">Ignicoccus hospitalis (strain KIN4/I / DSM 18386 / JCM 14125)</name>
    <dbReference type="NCBI Taxonomy" id="453591"/>
    <lineage>
        <taxon>Archaea</taxon>
        <taxon>Thermoproteota</taxon>
        <taxon>Thermoprotei</taxon>
        <taxon>Desulfurococcales</taxon>
        <taxon>Desulfurococcaceae</taxon>
        <taxon>Ignicoccus</taxon>
    </lineage>
</organism>
<evidence type="ECO:0000255" key="1">
    <source>
        <dbReference type="HAMAP-Rule" id="MF_00310"/>
    </source>
</evidence>
<keyword id="KW-0066">ATP synthesis</keyword>
<keyword id="KW-1003">Cell membrane</keyword>
<keyword id="KW-0375">Hydrogen ion transport</keyword>
<keyword id="KW-0406">Ion transport</keyword>
<keyword id="KW-0472">Membrane</keyword>
<keyword id="KW-1185">Reference proteome</keyword>
<keyword id="KW-0813">Transport</keyword>
<sequence length="471" mass="52286">MAVPSVKGKEYESVSEIRGQLLVVEGVSDAGYGELVDIEMPSGEKRRGIVLETGKGLAVVQVFEGTTGISPAGTKVRFTGRILEMGVSEDMLGRIMNALGEPIDGGAPIKAVEKRNVWGEPINPYAREYPDEFIETGISAIDGMNSLVRGQKLPIFSGSGLPHNKLAAQIARQATVRGEEESFAVVFAAVGIQYDELLFFKKAFEETGAISRTAMFVSLANEPAMMKIVTPRAALTLAEYLAFQKDMHVLVIITDMTNYCEALREISASREEVPSRQGYPGYMYTDLATIYERAGRVKGSKGSITQMPILTMPNDDITHPIPDLTGYITEGQIVLSRDLHNKGIYPPINVLMSLSRLMRDGIGKGKTREDHPDVANQLFAAYSRAVELRGLAAIVGEESLSEVDRKYLRFGEAFEQKFLKQDYYERRTIEQTLDLAWEVLSILPEEELTKIRPEYIKKYHPKYRVKAASQK</sequence>
<name>AATB_IGNH4</name>
<comment type="function">
    <text evidence="1">Component of the A-type ATP synthase that produces ATP from ADP in the presence of a proton gradient across the membrane. The B chain is a regulatory subunit.</text>
</comment>
<comment type="subunit">
    <text evidence="1">Has multiple subunits with at least A(3), B(3), C, D, E, F, H, I and proteolipid K(x).</text>
</comment>
<comment type="interaction">
    <interactant intactId="EBI-15831444">
        <id>A8AAA9</id>
    </interactant>
    <interactant intactId="EBI-15831423">
        <id>A8AC29</id>
        <label>atpA</label>
    </interactant>
    <organismsDiffer>false</organismsDiffer>
    <experiments>2</experiments>
</comment>
<comment type="subcellular location">
    <subcellularLocation>
        <location evidence="1">Cell membrane</location>
        <topology evidence="1">Peripheral membrane protein</topology>
    </subcellularLocation>
</comment>
<comment type="similarity">
    <text evidence="1">Belongs to the ATPase alpha/beta chains family.</text>
</comment>
<feature type="chain" id="PRO_0000322501" description="A-type ATP synthase subunit B">
    <location>
        <begin position="1"/>
        <end position="471"/>
    </location>
</feature>
<dbReference type="EMBL" id="CP000816">
    <property type="protein sequence ID" value="ABU81861.1"/>
    <property type="molecule type" value="Genomic_DNA"/>
</dbReference>
<dbReference type="RefSeq" id="WP_011998713.1">
    <property type="nucleotide sequence ID" value="NC_009776.1"/>
</dbReference>
<dbReference type="SMR" id="A8AAA9"/>
<dbReference type="DIP" id="DIP-58545N"/>
<dbReference type="IntAct" id="A8AAA9">
    <property type="interactions" value="1"/>
</dbReference>
<dbReference type="STRING" id="453591.Igni_0679"/>
<dbReference type="GeneID" id="5562680"/>
<dbReference type="KEGG" id="iho:Igni_0679"/>
<dbReference type="eggNOG" id="arCOG00865">
    <property type="taxonomic scope" value="Archaea"/>
</dbReference>
<dbReference type="HOGENOM" id="CLU_022916_0_0_2"/>
<dbReference type="OrthoDB" id="32941at2157"/>
<dbReference type="PhylomeDB" id="A8AAA9"/>
<dbReference type="Proteomes" id="UP000000262">
    <property type="component" value="Chromosome"/>
</dbReference>
<dbReference type="GO" id="GO:0005886">
    <property type="term" value="C:plasma membrane"/>
    <property type="evidence" value="ECO:0007669"/>
    <property type="project" value="UniProtKB-SubCell"/>
</dbReference>
<dbReference type="GO" id="GO:0005524">
    <property type="term" value="F:ATP binding"/>
    <property type="evidence" value="ECO:0007669"/>
    <property type="project" value="UniProtKB-UniRule"/>
</dbReference>
<dbReference type="GO" id="GO:0046933">
    <property type="term" value="F:proton-transporting ATP synthase activity, rotational mechanism"/>
    <property type="evidence" value="ECO:0007669"/>
    <property type="project" value="UniProtKB-UniRule"/>
</dbReference>
<dbReference type="GO" id="GO:0046961">
    <property type="term" value="F:proton-transporting ATPase activity, rotational mechanism"/>
    <property type="evidence" value="ECO:0007669"/>
    <property type="project" value="TreeGrafter"/>
</dbReference>
<dbReference type="GO" id="GO:0042777">
    <property type="term" value="P:proton motive force-driven plasma membrane ATP synthesis"/>
    <property type="evidence" value="ECO:0007669"/>
    <property type="project" value="UniProtKB-UniRule"/>
</dbReference>
<dbReference type="CDD" id="cd18112">
    <property type="entry name" value="ATP-synt_V_A-type_beta_C"/>
    <property type="match status" value="1"/>
</dbReference>
<dbReference type="CDD" id="cd18118">
    <property type="entry name" value="ATP-synt_V_A-type_beta_N"/>
    <property type="match status" value="1"/>
</dbReference>
<dbReference type="CDD" id="cd01135">
    <property type="entry name" value="V_A-ATPase_B"/>
    <property type="match status" value="1"/>
</dbReference>
<dbReference type="Gene3D" id="3.40.50.12240">
    <property type="match status" value="1"/>
</dbReference>
<dbReference type="HAMAP" id="MF_00310">
    <property type="entry name" value="ATP_synth_B_arch"/>
    <property type="match status" value="1"/>
</dbReference>
<dbReference type="InterPro" id="IPR055190">
    <property type="entry name" value="ATP-synt_VA_C"/>
</dbReference>
<dbReference type="InterPro" id="IPR020003">
    <property type="entry name" value="ATPase_a/bsu_AS"/>
</dbReference>
<dbReference type="InterPro" id="IPR004100">
    <property type="entry name" value="ATPase_F1/V1/A1_a/bsu_N"/>
</dbReference>
<dbReference type="InterPro" id="IPR000194">
    <property type="entry name" value="ATPase_F1/V1/A1_a/bsu_nucl-bd"/>
</dbReference>
<dbReference type="InterPro" id="IPR027417">
    <property type="entry name" value="P-loop_NTPase"/>
</dbReference>
<dbReference type="InterPro" id="IPR022879">
    <property type="entry name" value="V-ATPase_su_B/beta"/>
</dbReference>
<dbReference type="NCBIfam" id="NF003235">
    <property type="entry name" value="PRK04196.1"/>
    <property type="match status" value="1"/>
</dbReference>
<dbReference type="PANTHER" id="PTHR43389">
    <property type="entry name" value="V-TYPE PROTON ATPASE SUBUNIT B"/>
    <property type="match status" value="1"/>
</dbReference>
<dbReference type="PANTHER" id="PTHR43389:SF4">
    <property type="entry name" value="V-TYPE PROTON ATPASE SUBUNIT B"/>
    <property type="match status" value="1"/>
</dbReference>
<dbReference type="Pfam" id="PF00006">
    <property type="entry name" value="ATP-synt_ab"/>
    <property type="match status" value="1"/>
</dbReference>
<dbReference type="Pfam" id="PF02874">
    <property type="entry name" value="ATP-synt_ab_N"/>
    <property type="match status" value="1"/>
</dbReference>
<dbReference type="Pfam" id="PF22919">
    <property type="entry name" value="ATP-synt_VA_C"/>
    <property type="match status" value="1"/>
</dbReference>
<dbReference type="PIRSF" id="PIRSF039114">
    <property type="entry name" value="V-ATPsynth_beta/V-ATPase_B"/>
    <property type="match status" value="1"/>
</dbReference>
<dbReference type="SUPFAM" id="SSF47917">
    <property type="entry name" value="C-terminal domain of alpha and beta subunits of F1 ATP synthase"/>
    <property type="match status" value="1"/>
</dbReference>
<dbReference type="SUPFAM" id="SSF52540">
    <property type="entry name" value="P-loop containing nucleoside triphosphate hydrolases"/>
    <property type="match status" value="1"/>
</dbReference>
<dbReference type="PROSITE" id="PS00152">
    <property type="entry name" value="ATPASE_ALPHA_BETA"/>
    <property type="match status" value="1"/>
</dbReference>
<accession>A8AAA9</accession>
<protein>
    <recommendedName>
        <fullName evidence="1">A-type ATP synthase subunit B</fullName>
    </recommendedName>
</protein>
<reference key="1">
    <citation type="journal article" date="2008" name="Genome Biol.">
        <title>A genomic analysis of the archaeal system Ignicoccus hospitalis-Nanoarchaeum equitans.</title>
        <authorList>
            <person name="Podar M."/>
            <person name="Anderson I."/>
            <person name="Makarova K.S."/>
            <person name="Elkins J.G."/>
            <person name="Ivanova N."/>
            <person name="Wall M.A."/>
            <person name="Lykidis A."/>
            <person name="Mavromatis K."/>
            <person name="Sun H."/>
            <person name="Hudson M.E."/>
            <person name="Chen W."/>
            <person name="Deciu C."/>
            <person name="Hutchison D."/>
            <person name="Eads J.R."/>
            <person name="Anderson A."/>
            <person name="Fernandes F."/>
            <person name="Szeto E."/>
            <person name="Lapidus A."/>
            <person name="Kyrpides N.C."/>
            <person name="Saier M.H. Jr."/>
            <person name="Richardson P.M."/>
            <person name="Rachel R."/>
            <person name="Huber H."/>
            <person name="Eisen J.A."/>
            <person name="Koonin E.V."/>
            <person name="Keller M."/>
            <person name="Stetter K.O."/>
        </authorList>
    </citation>
    <scope>NUCLEOTIDE SEQUENCE [LARGE SCALE GENOMIC DNA]</scope>
    <source>
        <strain>KIN4/I / DSM 18386 / JCM 14125</strain>
    </source>
</reference>
<gene>
    <name evidence="1" type="primary">atpB</name>
    <name type="ordered locus">Igni_0679</name>
</gene>